<sequence>MYGNNNPGSNNNNGGYPPYGYNKSSGGRGFGMSHSLPSGMSRYAFSPQDTEFSFPSSSSRRGYNEFPGGGGIGIGANGGSANNLGGNMCNLLPMTSNNSLSNLCGLSLGSGGSDDHMMMHDQRSSNTNLIVNYLPQDMTDRELYALFRAIGPINTCRIMRDYKTGYSFGYAFVDFTSEMDSQRAIKVLNGITVRNKRLKVSYARPGGESIKDTNLYVTNLPRTITDDQLDTIFGKYGSIVQKNILRDKLTGRPRGVAFVRYNKREEAQEAISALNNVIPEGGSQPLSVRLAQEHGKAKAAHFMSQIGVPSANAPPPPPPPPHMAFNNMVHRGRSIKSQQRFQKTHPYFDAQKFI</sequence>
<organism>
    <name type="scientific">Drosophila subobscura</name>
    <name type="common">Fruit fly</name>
    <dbReference type="NCBI Taxonomy" id="7241"/>
    <lineage>
        <taxon>Eukaryota</taxon>
        <taxon>Metazoa</taxon>
        <taxon>Ecdysozoa</taxon>
        <taxon>Arthropoda</taxon>
        <taxon>Hexapoda</taxon>
        <taxon>Insecta</taxon>
        <taxon>Pterygota</taxon>
        <taxon>Neoptera</taxon>
        <taxon>Endopterygota</taxon>
        <taxon>Diptera</taxon>
        <taxon>Brachycera</taxon>
        <taxon>Muscomorpha</taxon>
        <taxon>Ephydroidea</taxon>
        <taxon>Drosophilidae</taxon>
        <taxon>Drosophila</taxon>
        <taxon>Sophophora</taxon>
    </lineage>
</organism>
<keyword id="KW-0025">Alternative splicing</keyword>
<keyword id="KW-0963">Cytoplasm</keyword>
<keyword id="KW-0221">Differentiation</keyword>
<keyword id="KW-0539">Nucleus</keyword>
<keyword id="KW-0677">Repeat</keyword>
<keyword id="KW-0694">RNA-binding</keyword>
<keyword id="KW-0726">Sexual differentiation</keyword>
<keyword id="KW-0804">Transcription</keyword>
<keyword id="KW-0805">Transcription regulation</keyword>
<gene>
    <name evidence="5" type="primary">Sxl</name>
</gene>
<reference key="1">
    <citation type="journal article" date="1996" name="Genetics">
        <title>Regulation of the gene Sex-lethal: a comparative analysis of Drosophila melanogaster and Drosophila subobscura.</title>
        <authorList>
            <person name="Penalva L.O.F."/>
            <person name="Sakamoto H."/>
            <person name="Navarro-Sabate A."/>
            <person name="Sakashita E."/>
            <person name="Granadino B."/>
            <person name="Segarra C."/>
            <person name="Sanchez L."/>
        </authorList>
    </citation>
    <scope>NUCLEOTIDE SEQUENCE [GENOMIC DNA / MRNA] (ISOFORMS 1; 2; 3; 4 AND 5)</scope>
</reference>
<reference key="2">
    <citation type="submission" date="1999-08" db="UniProtKB">
        <authorList>
            <person name="Penalva L.O.F."/>
            <person name="Sanchez L."/>
        </authorList>
    </citation>
    <scope>SEQUENCE REVISION</scope>
</reference>
<accession>Q24668</accession>
<accession>Q24665</accession>
<accession>Q24666</accession>
<accession>Q24667</accession>
<protein>
    <recommendedName>
        <fullName evidence="5">Protein sex-lethal</fullName>
    </recommendedName>
</protein>
<evidence type="ECO:0000250" key="1">
    <source>
        <dbReference type="UniProtKB" id="P19339"/>
    </source>
</evidence>
<evidence type="ECO:0000255" key="2">
    <source>
        <dbReference type="PROSITE-ProRule" id="PRU00176"/>
    </source>
</evidence>
<evidence type="ECO:0000256" key="3">
    <source>
        <dbReference type="SAM" id="MobiDB-lite"/>
    </source>
</evidence>
<evidence type="ECO:0000269" key="4">
    <source>
    </source>
</evidence>
<evidence type="ECO:0000303" key="5">
    <source>
    </source>
</evidence>
<evidence type="ECO:0000305" key="6"/>
<feature type="chain" id="PRO_0000081968" description="Protein sex-lethal">
    <location>
        <begin position="1"/>
        <end position="354"/>
    </location>
</feature>
<feature type="domain" description="RRM 1" evidence="2">
    <location>
        <begin position="127"/>
        <end position="205"/>
    </location>
</feature>
<feature type="domain" description="RRM 2" evidence="2">
    <location>
        <begin position="213"/>
        <end position="293"/>
    </location>
</feature>
<feature type="region of interest" description="Disordered" evidence="3">
    <location>
        <begin position="1"/>
        <end position="20"/>
    </location>
</feature>
<feature type="splice variant" id="VSP_005887" description="In isoform 1 and isoform 4." evidence="5">
    <original>MYGNNNPGSNNNNGGYPPYGYNKSS</original>
    <variation>MDFSFETVTPPCRPHGRRIIISRWQ</variation>
    <location>
        <begin position="1"/>
        <end position="25"/>
    </location>
</feature>
<feature type="splice variant" id="VSP_005888" description="In isoform 3." evidence="5">
    <original>GGRGFGMSHSLPSGMSRYAFSPQDTEFSFPSSSS</original>
    <variation>SFHSYGVAGVTACPPSKSRNRFRFRQKRKDTRNS</variation>
    <location>
        <begin position="26"/>
        <end position="59"/>
    </location>
</feature>
<feature type="splice variant" id="VSP_005890" description="In isoform 4 and isoform 5." evidence="5">
    <location>
        <begin position="41"/>
        <end position="48"/>
    </location>
</feature>
<feature type="splice variant" id="VSP_005889" description="In isoform 3." evidence="5">
    <location>
        <begin position="60"/>
        <end position="354"/>
    </location>
</feature>
<proteinExistence type="evidence at transcript level"/>
<name>SXL_DROSU</name>
<dbReference type="EMBL" id="X98370">
    <property type="protein sequence ID" value="CAA67016.1"/>
    <property type="molecule type" value="mRNA"/>
</dbReference>
<dbReference type="EMBL" id="X98371">
    <property type="protein sequence ID" value="CAA67017.1"/>
    <property type="status" value="ALT_SEQ"/>
    <property type="molecule type" value="Genomic_DNA"/>
</dbReference>
<dbReference type="EMBL" id="X98371">
    <property type="protein sequence ID" value="CAA67018.1"/>
    <property type="molecule type" value="Genomic_DNA"/>
</dbReference>
<dbReference type="EMBL" id="X98371">
    <property type="protein sequence ID" value="CAA67019.1"/>
    <property type="status" value="ALT_SEQ"/>
    <property type="molecule type" value="Genomic_DNA"/>
</dbReference>
<dbReference type="SMR" id="Q24668"/>
<dbReference type="GO" id="GO:0005737">
    <property type="term" value="C:cytoplasm"/>
    <property type="evidence" value="ECO:0007669"/>
    <property type="project" value="UniProtKB-SubCell"/>
</dbReference>
<dbReference type="GO" id="GO:0005634">
    <property type="term" value="C:nucleus"/>
    <property type="evidence" value="ECO:0007669"/>
    <property type="project" value="UniProtKB-SubCell"/>
</dbReference>
<dbReference type="GO" id="GO:1990904">
    <property type="term" value="C:ribonucleoprotein complex"/>
    <property type="evidence" value="ECO:0007669"/>
    <property type="project" value="InterPro"/>
</dbReference>
<dbReference type="GO" id="GO:0003729">
    <property type="term" value="F:mRNA binding"/>
    <property type="evidence" value="ECO:0007669"/>
    <property type="project" value="TreeGrafter"/>
</dbReference>
<dbReference type="GO" id="GO:0000380">
    <property type="term" value="P:alternative mRNA splicing, via spliceosome"/>
    <property type="evidence" value="ECO:0007669"/>
    <property type="project" value="InterPro"/>
</dbReference>
<dbReference type="GO" id="GO:0030154">
    <property type="term" value="P:cell differentiation"/>
    <property type="evidence" value="ECO:0007669"/>
    <property type="project" value="UniProtKB-KW"/>
</dbReference>
<dbReference type="GO" id="GO:0007530">
    <property type="term" value="P:sex determination"/>
    <property type="evidence" value="ECO:0007669"/>
    <property type="project" value="InterPro"/>
</dbReference>
<dbReference type="GO" id="GO:0007548">
    <property type="term" value="P:sex differentiation"/>
    <property type="evidence" value="ECO:0007669"/>
    <property type="project" value="UniProtKB-KW"/>
</dbReference>
<dbReference type="CDD" id="cd12649">
    <property type="entry name" value="RRM1_SXL"/>
    <property type="match status" value="1"/>
</dbReference>
<dbReference type="CDD" id="cd12376">
    <property type="entry name" value="RRM2_Hu_like"/>
    <property type="match status" value="1"/>
</dbReference>
<dbReference type="FunFam" id="3.30.70.330:FF:000205">
    <property type="entry name" value="Sex lethal, isoform B"/>
    <property type="match status" value="1"/>
</dbReference>
<dbReference type="FunFam" id="3.30.70.330:FF:000383">
    <property type="entry name" value="Sex lethal, isoform D"/>
    <property type="match status" value="1"/>
</dbReference>
<dbReference type="Gene3D" id="3.30.70.330">
    <property type="match status" value="2"/>
</dbReference>
<dbReference type="InterPro" id="IPR050502">
    <property type="entry name" value="Euk_RNA-bind_prot"/>
</dbReference>
<dbReference type="InterPro" id="IPR002343">
    <property type="entry name" value="Hud_Sxl_RNA"/>
</dbReference>
<dbReference type="InterPro" id="IPR012677">
    <property type="entry name" value="Nucleotide-bd_a/b_plait_sf"/>
</dbReference>
<dbReference type="InterPro" id="IPR035979">
    <property type="entry name" value="RBD_domain_sf"/>
</dbReference>
<dbReference type="InterPro" id="IPR000504">
    <property type="entry name" value="RRM_dom"/>
</dbReference>
<dbReference type="InterPro" id="IPR006546">
    <property type="entry name" value="Sxl"/>
</dbReference>
<dbReference type="NCBIfam" id="TIGR01659">
    <property type="entry name" value="sex-lethal"/>
    <property type="match status" value="1"/>
</dbReference>
<dbReference type="PANTHER" id="PTHR48025">
    <property type="entry name" value="OS02G0815200 PROTEIN"/>
    <property type="match status" value="1"/>
</dbReference>
<dbReference type="PANTHER" id="PTHR48025:SF1">
    <property type="entry name" value="RRM DOMAIN-CONTAINING PROTEIN"/>
    <property type="match status" value="1"/>
</dbReference>
<dbReference type="Pfam" id="PF00076">
    <property type="entry name" value="RRM_1"/>
    <property type="match status" value="2"/>
</dbReference>
<dbReference type="PRINTS" id="PR00961">
    <property type="entry name" value="HUDSXLRNA"/>
</dbReference>
<dbReference type="SMART" id="SM00360">
    <property type="entry name" value="RRM"/>
    <property type="match status" value="2"/>
</dbReference>
<dbReference type="SUPFAM" id="SSF54928">
    <property type="entry name" value="RNA-binding domain, RBD"/>
    <property type="match status" value="1"/>
</dbReference>
<dbReference type="PROSITE" id="PS50102">
    <property type="entry name" value="RRM"/>
    <property type="match status" value="2"/>
</dbReference>
<comment type="function">
    <text evidence="1">Sex determination switch protein, which controls sexual development and dosage compensation in females. Sxl protein is only active in females: it is inactive in males throughout development. Acts as a mRNA-binding protein, which specifically binds to a subset of pre-mRNAs and mRNAs and regulates their processing and/or translation. Promotes sexual development by controlling the female-specific alternative splicing of the transformer (tra) pre-mRNA: binds tightly to a characteristic uridine-rich polypyrimidine tract at the non-sex specific 3' splice site in one of the tra introns, preventing the general splicing factor U2AF from binding to this site and forcing it to bind to the female-specific 3' splice site. Acts as an inhibitor of dosage compensation in females by preventing production of msl-2 protein, an essential component of the MSL complex, the complex that mediates X-chromosome dosage compensation. Specifially binds to uridine stretches in both the 5'- and 3'-UTR of msl-2 transcripts. Sxl first acts at the splicing level by promoting retention of an intron in the 5' UTR of msl-2 pre-mRNA. The retained intron contains Sxl-binding sites that are required for subsequent steps of repression: after msl-2 mRNA export into the cytoplasm, Sxl coordinates its translational repression by targeting early steps of translation initiation. Together with how, Sxl also prevents production of msl-2 protein by preventing nuclear export of msl-2 transcripts.</text>
</comment>
<comment type="subunit">
    <text evidence="1">Part of a complex containing fl(2)d, Sxl and vir. Interacts with nito. Interacts with Unr; cooperates with Sxl to prevent translation of msl-2 transcripts. Interacts with how; promoting nuclear retention of msl-2 transcripts.</text>
</comment>
<comment type="subcellular location">
    <subcellularLocation>
        <location evidence="1">Nucleus</location>
    </subcellularLocation>
    <subcellularLocation>
        <location evidence="1">Cytoplasm</location>
    </subcellularLocation>
</comment>
<comment type="alternative products">
    <event type="alternative splicing"/>
    <isoform>
        <id>Q24668-1</id>
        <name>2</name>
        <name>Female-specific</name>
        <sequence type="displayed"/>
    </isoform>
    <isoform>
        <id>Q24668-2</id>
        <name>1</name>
        <name>Embryo-specific</name>
        <sequence type="described" ref="VSP_005887"/>
    </isoform>
    <isoform>
        <id>Q24668-3</id>
        <name>3</name>
        <name>Male-specific</name>
        <sequence type="described" ref="VSP_005888 VSP_005889"/>
    </isoform>
    <isoform>
        <id>Q24668-4</id>
        <name>4</name>
        <name>Embryo-specific-8AA</name>
        <sequence type="described" ref="VSP_005887 VSP_005890"/>
    </isoform>
    <isoform>
        <id>Q24668-5</id>
        <name>5</name>
        <name>Female-specific-8AA</name>
        <sequence type="described" ref="VSP_005890"/>
    </isoform>
    <text>Additional isoforms seem to exist.</text>
</comment>
<comment type="tissue specificity">
    <text evidence="4">The embryo-specific isoform is not expressed in the pole cells, which are the progenitors of the germline.</text>
</comment>
<comment type="developmental stage">
    <text evidence="4">The embryo-specific isoform is expressed during the syncytial blastoderm stage. Expressed only in chromosomal female embryos.</text>
</comment>
<comment type="sequence caution" evidence="6">
    <conflict type="erroneous gene model prediction">
        <sequence resource="EMBL-CDS" id="CAA67017"/>
    </conflict>
</comment>
<comment type="sequence caution" evidence="6">
    <conflict type="erroneous gene model prediction">
        <sequence resource="EMBL-CDS" id="CAA67019"/>
    </conflict>
</comment>